<reference key="1">
    <citation type="journal article" date="2001" name="Nature">
        <title>Complete genome sequence of a multiple drug resistant Salmonella enterica serovar Typhi CT18.</title>
        <authorList>
            <person name="Parkhill J."/>
            <person name="Dougan G."/>
            <person name="James K.D."/>
            <person name="Thomson N.R."/>
            <person name="Pickard D."/>
            <person name="Wain J."/>
            <person name="Churcher C.M."/>
            <person name="Mungall K.L."/>
            <person name="Bentley S.D."/>
            <person name="Holden M.T.G."/>
            <person name="Sebaihia M."/>
            <person name="Baker S."/>
            <person name="Basham D."/>
            <person name="Brooks K."/>
            <person name="Chillingworth T."/>
            <person name="Connerton P."/>
            <person name="Cronin A."/>
            <person name="Davis P."/>
            <person name="Davies R.M."/>
            <person name="Dowd L."/>
            <person name="White N."/>
            <person name="Farrar J."/>
            <person name="Feltwell T."/>
            <person name="Hamlin N."/>
            <person name="Haque A."/>
            <person name="Hien T.T."/>
            <person name="Holroyd S."/>
            <person name="Jagels K."/>
            <person name="Krogh A."/>
            <person name="Larsen T.S."/>
            <person name="Leather S."/>
            <person name="Moule S."/>
            <person name="O'Gaora P."/>
            <person name="Parry C."/>
            <person name="Quail M.A."/>
            <person name="Rutherford K.M."/>
            <person name="Simmonds M."/>
            <person name="Skelton J."/>
            <person name="Stevens K."/>
            <person name="Whitehead S."/>
            <person name="Barrell B.G."/>
        </authorList>
    </citation>
    <scope>NUCLEOTIDE SEQUENCE [LARGE SCALE GENOMIC DNA]</scope>
    <source>
        <strain>CT18</strain>
    </source>
</reference>
<reference key="2">
    <citation type="journal article" date="2003" name="J. Bacteriol.">
        <title>Comparative genomics of Salmonella enterica serovar Typhi strains Ty2 and CT18.</title>
        <authorList>
            <person name="Deng W."/>
            <person name="Liou S.-R."/>
            <person name="Plunkett G. III"/>
            <person name="Mayhew G.F."/>
            <person name="Rose D.J."/>
            <person name="Burland V."/>
            <person name="Kodoyianni V."/>
            <person name="Schwartz D.C."/>
            <person name="Blattner F.R."/>
        </authorList>
    </citation>
    <scope>NUCLEOTIDE SEQUENCE [LARGE SCALE GENOMIC DNA]</scope>
    <source>
        <strain>ATCC 700931 / Ty2</strain>
    </source>
</reference>
<keyword id="KW-0067">ATP-binding</keyword>
<keyword id="KW-0235">DNA replication</keyword>
<keyword id="KW-0238">DNA-binding</keyword>
<keyword id="KW-0347">Helicase</keyword>
<keyword id="KW-0378">Hydrolase</keyword>
<keyword id="KW-0413">Isomerase</keyword>
<keyword id="KW-0547">Nucleotide-binding</keyword>
<keyword id="KW-0639">Primosome</keyword>
<evidence type="ECO:0000250" key="1">
    <source>
        <dbReference type="UniProtKB" id="P0ACB0"/>
    </source>
</evidence>
<evidence type="ECO:0000255" key="2">
    <source>
        <dbReference type="PROSITE-ProRule" id="PRU00596"/>
    </source>
</evidence>
<evidence type="ECO:0000256" key="3">
    <source>
        <dbReference type="SAM" id="MobiDB-lite"/>
    </source>
</evidence>
<evidence type="ECO:0000305" key="4"/>
<feature type="chain" id="PRO_0000102030" description="Replicative DNA helicase DnaB">
    <location>
        <begin position="1"/>
        <end position="471"/>
    </location>
</feature>
<feature type="domain" description="SF4 helicase" evidence="2">
    <location>
        <begin position="200"/>
        <end position="467"/>
    </location>
</feature>
<feature type="region of interest" description="Disordered" evidence="3">
    <location>
        <begin position="1"/>
        <end position="22"/>
    </location>
</feature>
<feature type="binding site" evidence="4">
    <location>
        <begin position="231"/>
        <end position="238"/>
    </location>
    <ligand>
        <name>ATP</name>
        <dbReference type="ChEBI" id="CHEBI:30616"/>
    </ligand>
</feature>
<protein>
    <recommendedName>
        <fullName>Replicative DNA helicase DnaB</fullName>
        <ecNumber evidence="1">5.6.2.3</ecNumber>
    </recommendedName>
    <alternativeName>
        <fullName evidence="4">DNA 5'-3' helicase DnaB</fullName>
    </alternativeName>
</protein>
<proteinExistence type="inferred from homology"/>
<dbReference type="EC" id="5.6.2.3" evidence="1"/>
<dbReference type="EMBL" id="AL513382">
    <property type="protein sequence ID" value="CAD09230.1"/>
    <property type="molecule type" value="Genomic_DNA"/>
</dbReference>
<dbReference type="EMBL" id="AE014613">
    <property type="protein sequence ID" value="AAO71616.1"/>
    <property type="molecule type" value="Genomic_DNA"/>
</dbReference>
<dbReference type="RefSeq" id="NP_458544.1">
    <property type="nucleotide sequence ID" value="NC_003198.1"/>
</dbReference>
<dbReference type="RefSeq" id="WP_000918353.1">
    <property type="nucleotide sequence ID" value="NZ_WSUR01000027.1"/>
</dbReference>
<dbReference type="SMR" id="P0A1Q5"/>
<dbReference type="STRING" id="220341.gene:17588274"/>
<dbReference type="KEGG" id="stt:t4152"/>
<dbReference type="KEGG" id="sty:STY4442"/>
<dbReference type="PATRIC" id="fig|220341.7.peg.4542"/>
<dbReference type="eggNOG" id="COG0305">
    <property type="taxonomic scope" value="Bacteria"/>
</dbReference>
<dbReference type="HOGENOM" id="CLU_005373_0_0_6"/>
<dbReference type="OMA" id="IEFHARI"/>
<dbReference type="OrthoDB" id="9773982at2"/>
<dbReference type="Proteomes" id="UP000000541">
    <property type="component" value="Chromosome"/>
</dbReference>
<dbReference type="Proteomes" id="UP000002670">
    <property type="component" value="Chromosome"/>
</dbReference>
<dbReference type="GO" id="GO:0005829">
    <property type="term" value="C:cytosol"/>
    <property type="evidence" value="ECO:0007669"/>
    <property type="project" value="TreeGrafter"/>
</dbReference>
<dbReference type="GO" id="GO:1990077">
    <property type="term" value="C:primosome complex"/>
    <property type="evidence" value="ECO:0007669"/>
    <property type="project" value="UniProtKB-KW"/>
</dbReference>
<dbReference type="GO" id="GO:0005524">
    <property type="term" value="F:ATP binding"/>
    <property type="evidence" value="ECO:0007669"/>
    <property type="project" value="UniProtKB-KW"/>
</dbReference>
<dbReference type="GO" id="GO:0016887">
    <property type="term" value="F:ATP hydrolysis activity"/>
    <property type="evidence" value="ECO:0007669"/>
    <property type="project" value="InterPro"/>
</dbReference>
<dbReference type="GO" id="GO:0003677">
    <property type="term" value="F:DNA binding"/>
    <property type="evidence" value="ECO:0007669"/>
    <property type="project" value="UniProtKB-KW"/>
</dbReference>
<dbReference type="GO" id="GO:0003678">
    <property type="term" value="F:DNA helicase activity"/>
    <property type="evidence" value="ECO:0007669"/>
    <property type="project" value="InterPro"/>
</dbReference>
<dbReference type="GO" id="GO:0006269">
    <property type="term" value="P:DNA replication, synthesis of primer"/>
    <property type="evidence" value="ECO:0007669"/>
    <property type="project" value="UniProtKB-KW"/>
</dbReference>
<dbReference type="CDD" id="cd00984">
    <property type="entry name" value="DnaB_C"/>
    <property type="match status" value="1"/>
</dbReference>
<dbReference type="FunFam" id="1.10.860.10:FF:000002">
    <property type="entry name" value="Replicative DNA helicase"/>
    <property type="match status" value="1"/>
</dbReference>
<dbReference type="FunFam" id="3.40.50.300:FF:000076">
    <property type="entry name" value="Replicative DNA helicase"/>
    <property type="match status" value="1"/>
</dbReference>
<dbReference type="Gene3D" id="1.10.860.10">
    <property type="entry name" value="DNAb Helicase, Chain A"/>
    <property type="match status" value="1"/>
</dbReference>
<dbReference type="Gene3D" id="3.40.50.300">
    <property type="entry name" value="P-loop containing nucleotide triphosphate hydrolases"/>
    <property type="match status" value="1"/>
</dbReference>
<dbReference type="InterPro" id="IPR003593">
    <property type="entry name" value="AAA+_ATPase"/>
</dbReference>
<dbReference type="InterPro" id="IPR036185">
    <property type="entry name" value="DNA_heli_DnaB-like_N_sf"/>
</dbReference>
<dbReference type="InterPro" id="IPR007692">
    <property type="entry name" value="DNA_helicase_DnaB"/>
</dbReference>
<dbReference type="InterPro" id="IPR007694">
    <property type="entry name" value="DNA_helicase_DnaB-like_C"/>
</dbReference>
<dbReference type="InterPro" id="IPR007693">
    <property type="entry name" value="DNA_helicase_DnaB-like_N"/>
</dbReference>
<dbReference type="InterPro" id="IPR016136">
    <property type="entry name" value="DNA_helicase_N/primase_C"/>
</dbReference>
<dbReference type="InterPro" id="IPR027417">
    <property type="entry name" value="P-loop_NTPase"/>
</dbReference>
<dbReference type="NCBIfam" id="TIGR00665">
    <property type="entry name" value="DnaB"/>
    <property type="match status" value="1"/>
</dbReference>
<dbReference type="NCBIfam" id="NF004384">
    <property type="entry name" value="PRK05748.1"/>
    <property type="match status" value="1"/>
</dbReference>
<dbReference type="NCBIfam" id="NF005945">
    <property type="entry name" value="PRK08006.1"/>
    <property type="match status" value="1"/>
</dbReference>
<dbReference type="NCBIfam" id="NF006458">
    <property type="entry name" value="PRK08840.1"/>
    <property type="match status" value="1"/>
</dbReference>
<dbReference type="PANTHER" id="PTHR30153:SF2">
    <property type="entry name" value="REPLICATIVE DNA HELICASE"/>
    <property type="match status" value="1"/>
</dbReference>
<dbReference type="PANTHER" id="PTHR30153">
    <property type="entry name" value="REPLICATIVE DNA HELICASE DNAB"/>
    <property type="match status" value="1"/>
</dbReference>
<dbReference type="Pfam" id="PF00772">
    <property type="entry name" value="DnaB"/>
    <property type="match status" value="1"/>
</dbReference>
<dbReference type="Pfam" id="PF03796">
    <property type="entry name" value="DnaB_C"/>
    <property type="match status" value="1"/>
</dbReference>
<dbReference type="SMART" id="SM00382">
    <property type="entry name" value="AAA"/>
    <property type="match status" value="1"/>
</dbReference>
<dbReference type="SUPFAM" id="SSF48024">
    <property type="entry name" value="N-terminal domain of DnaB helicase"/>
    <property type="match status" value="1"/>
</dbReference>
<dbReference type="SUPFAM" id="SSF52540">
    <property type="entry name" value="P-loop containing nucleoside triphosphate hydrolases"/>
    <property type="match status" value="1"/>
</dbReference>
<dbReference type="PROSITE" id="PS51199">
    <property type="entry name" value="SF4_HELICASE"/>
    <property type="match status" value="1"/>
</dbReference>
<accession>P0A1Q5</accession>
<accession>P10338</accession>
<name>DNAB_SALTI</name>
<gene>
    <name type="primary">dnaB</name>
    <name type="ordered locus">STY4442</name>
    <name type="ordered locus">t4152</name>
</gene>
<sequence length="471" mass="52687">MAGNKPFNKPQTDARDRDPQVAGIKVPPHSIEAEQSVLGGLMLDNERWDDVAERVVAEDFYTRPHRHIFTEMGRLQESGSPIDLITLAESLERQGQLDSVGGFAYLAELSKNTPSAANISAYADIVRERAVVRDMIAVAHEIADAGYDPQGRNSDELLDLAESRVFQIAENRANKDEGPKSIDQILDATVARIEQLFQQPHDGVTGVDTGYQDLNKKTAGLQRSDLIIVAARPSMGKTTFAMNLCENAAMLQDKPVLIFSLEMPGEQIMMRMLASLSRVDQTRIRTGQLDDEDWARISGTMGILLEKRNMYIDDSSGLTPTEVRSRARRIFREHGGLSLIMIDYLQLMRVPSLSDNRTLEIAEISRSLKALAKELQVPVVALSQLNRSLEQRADKRPVNSDLRESGSIEQDADLIMFIYRDEVYHENSDLKGIAEIIIGKQRNGPIGTVRLTFNGQWSRFDNYAGPQYDDE</sequence>
<organism>
    <name type="scientific">Salmonella typhi</name>
    <dbReference type="NCBI Taxonomy" id="90370"/>
    <lineage>
        <taxon>Bacteria</taxon>
        <taxon>Pseudomonadati</taxon>
        <taxon>Pseudomonadota</taxon>
        <taxon>Gammaproteobacteria</taxon>
        <taxon>Enterobacterales</taxon>
        <taxon>Enterobacteriaceae</taxon>
        <taxon>Salmonella</taxon>
    </lineage>
</organism>
<comment type="function">
    <text evidence="1">The main replicative DNA helicase, it participates in initiation and elongation during chromosome replication. Travels ahead of the DNA replisome, separating dsDNA into templates for DNA synthesis. A processive ATP-dependent 5'-3' DNA helicase it has DNA-dependent ATPase activity.</text>
</comment>
<comment type="catalytic activity">
    <reaction evidence="1">
        <text>Couples ATP hydrolysis with the unwinding of duplex DNA at the replication fork by translocating in the 5'-3' direction. This creates two antiparallel DNA single strands (ssDNA). The leading ssDNA polymer is the template for DNA polymerase III holoenzyme which synthesizes a continuous strand.</text>
        <dbReference type="EC" id="5.6.2.3"/>
    </reaction>
</comment>
<comment type="catalytic activity">
    <reaction evidence="1">
        <text>ATP + H2O = ADP + phosphate + H(+)</text>
        <dbReference type="Rhea" id="RHEA:13065"/>
        <dbReference type="ChEBI" id="CHEBI:15377"/>
        <dbReference type="ChEBI" id="CHEBI:15378"/>
        <dbReference type="ChEBI" id="CHEBI:30616"/>
        <dbReference type="ChEBI" id="CHEBI:43474"/>
        <dbReference type="ChEBI" id="CHEBI:456216"/>
        <dbReference type="EC" id="5.6.2.3"/>
    </reaction>
</comment>
<comment type="subunit">
    <text evidence="1">Homohexamer.</text>
</comment>
<comment type="similarity">
    <text evidence="4">Belongs to the helicase family. DnaB subfamily.</text>
</comment>